<reference key="1">
    <citation type="journal article" date="1998" name="Mol. Cell. Biol.">
        <title>Identification of a family of sorting nexin molecules and characterization of their association with receptors.</title>
        <authorList>
            <person name="Haft C.R."/>
            <person name="de la Luz Sierra M."/>
            <person name="Barr V.A."/>
            <person name="Haft D.H."/>
            <person name="Taylor S.I."/>
        </authorList>
    </citation>
    <scope>NUCLEOTIDE SEQUENCE [MRNA] (ISOFORM 1)</scope>
    <scope>FUNCTION</scope>
</reference>
<reference key="2">
    <citation type="journal article" date="2004" name="Nat. Genet.">
        <title>Complete sequencing and characterization of 21,243 full-length human cDNAs.</title>
        <authorList>
            <person name="Ota T."/>
            <person name="Suzuki Y."/>
            <person name="Nishikawa T."/>
            <person name="Otsuki T."/>
            <person name="Sugiyama T."/>
            <person name="Irie R."/>
            <person name="Wakamatsu A."/>
            <person name="Hayashi K."/>
            <person name="Sato H."/>
            <person name="Nagai K."/>
            <person name="Kimura K."/>
            <person name="Makita H."/>
            <person name="Sekine M."/>
            <person name="Obayashi M."/>
            <person name="Nishi T."/>
            <person name="Shibahara T."/>
            <person name="Tanaka T."/>
            <person name="Ishii S."/>
            <person name="Yamamoto J."/>
            <person name="Saito K."/>
            <person name="Kawai Y."/>
            <person name="Isono Y."/>
            <person name="Nakamura Y."/>
            <person name="Nagahari K."/>
            <person name="Murakami K."/>
            <person name="Yasuda T."/>
            <person name="Iwayanagi T."/>
            <person name="Wagatsuma M."/>
            <person name="Shiratori A."/>
            <person name="Sudo H."/>
            <person name="Hosoiri T."/>
            <person name="Kaku Y."/>
            <person name="Kodaira H."/>
            <person name="Kondo H."/>
            <person name="Sugawara M."/>
            <person name="Takahashi M."/>
            <person name="Kanda K."/>
            <person name="Yokoi T."/>
            <person name="Furuya T."/>
            <person name="Kikkawa E."/>
            <person name="Omura Y."/>
            <person name="Abe K."/>
            <person name="Kamihara K."/>
            <person name="Katsuta N."/>
            <person name="Sato K."/>
            <person name="Tanikawa M."/>
            <person name="Yamazaki M."/>
            <person name="Ninomiya K."/>
            <person name="Ishibashi T."/>
            <person name="Yamashita H."/>
            <person name="Murakawa K."/>
            <person name="Fujimori K."/>
            <person name="Tanai H."/>
            <person name="Kimata M."/>
            <person name="Watanabe M."/>
            <person name="Hiraoka S."/>
            <person name="Chiba Y."/>
            <person name="Ishida S."/>
            <person name="Ono Y."/>
            <person name="Takiguchi S."/>
            <person name="Watanabe S."/>
            <person name="Yosida M."/>
            <person name="Hotuta T."/>
            <person name="Kusano J."/>
            <person name="Kanehori K."/>
            <person name="Takahashi-Fujii A."/>
            <person name="Hara H."/>
            <person name="Tanase T.-O."/>
            <person name="Nomura Y."/>
            <person name="Togiya S."/>
            <person name="Komai F."/>
            <person name="Hara R."/>
            <person name="Takeuchi K."/>
            <person name="Arita M."/>
            <person name="Imose N."/>
            <person name="Musashino K."/>
            <person name="Yuuki H."/>
            <person name="Oshima A."/>
            <person name="Sasaki N."/>
            <person name="Aotsuka S."/>
            <person name="Yoshikawa Y."/>
            <person name="Matsunawa H."/>
            <person name="Ichihara T."/>
            <person name="Shiohata N."/>
            <person name="Sano S."/>
            <person name="Moriya S."/>
            <person name="Momiyama H."/>
            <person name="Satoh N."/>
            <person name="Takami S."/>
            <person name="Terashima Y."/>
            <person name="Suzuki O."/>
            <person name="Nakagawa S."/>
            <person name="Senoh A."/>
            <person name="Mizoguchi H."/>
            <person name="Goto Y."/>
            <person name="Shimizu F."/>
            <person name="Wakebe H."/>
            <person name="Hishigaki H."/>
            <person name="Watanabe T."/>
            <person name="Sugiyama A."/>
            <person name="Takemoto M."/>
            <person name="Kawakami B."/>
            <person name="Yamazaki M."/>
            <person name="Watanabe K."/>
            <person name="Kumagai A."/>
            <person name="Itakura S."/>
            <person name="Fukuzumi Y."/>
            <person name="Fujimori Y."/>
            <person name="Komiyama M."/>
            <person name="Tashiro H."/>
            <person name="Tanigami A."/>
            <person name="Fujiwara T."/>
            <person name="Ono T."/>
            <person name="Yamada K."/>
            <person name="Fujii Y."/>
            <person name="Ozaki K."/>
            <person name="Hirao M."/>
            <person name="Ohmori Y."/>
            <person name="Kawabata A."/>
            <person name="Hikiji T."/>
            <person name="Kobatake N."/>
            <person name="Inagaki H."/>
            <person name="Ikema Y."/>
            <person name="Okamoto S."/>
            <person name="Okitani R."/>
            <person name="Kawakami T."/>
            <person name="Noguchi S."/>
            <person name="Itoh T."/>
            <person name="Shigeta K."/>
            <person name="Senba T."/>
            <person name="Matsumura K."/>
            <person name="Nakajima Y."/>
            <person name="Mizuno T."/>
            <person name="Morinaga M."/>
            <person name="Sasaki M."/>
            <person name="Togashi T."/>
            <person name="Oyama M."/>
            <person name="Hata H."/>
            <person name="Watanabe M."/>
            <person name="Komatsu T."/>
            <person name="Mizushima-Sugano J."/>
            <person name="Satoh T."/>
            <person name="Shirai Y."/>
            <person name="Takahashi Y."/>
            <person name="Nakagawa K."/>
            <person name="Okumura K."/>
            <person name="Nagase T."/>
            <person name="Nomura N."/>
            <person name="Kikuchi H."/>
            <person name="Masuho Y."/>
            <person name="Yamashita R."/>
            <person name="Nakai K."/>
            <person name="Yada T."/>
            <person name="Nakamura Y."/>
            <person name="Ohara O."/>
            <person name="Isogai T."/>
            <person name="Sugano S."/>
        </authorList>
    </citation>
    <scope>NUCLEOTIDE SEQUENCE [LARGE SCALE MRNA] (ISOFORMS 1 AND 2)</scope>
    <source>
        <tissue>Placenta</tissue>
    </source>
</reference>
<reference key="3">
    <citation type="journal article" date="2006" name="Nature">
        <title>The DNA sequence, annotation and analysis of human chromosome 3.</title>
        <authorList>
            <person name="Muzny D.M."/>
            <person name="Scherer S.E."/>
            <person name="Kaul R."/>
            <person name="Wang J."/>
            <person name="Yu J."/>
            <person name="Sudbrak R."/>
            <person name="Buhay C.J."/>
            <person name="Chen R."/>
            <person name="Cree A."/>
            <person name="Ding Y."/>
            <person name="Dugan-Rocha S."/>
            <person name="Gill R."/>
            <person name="Gunaratne P."/>
            <person name="Harris R.A."/>
            <person name="Hawes A.C."/>
            <person name="Hernandez J."/>
            <person name="Hodgson A.V."/>
            <person name="Hume J."/>
            <person name="Jackson A."/>
            <person name="Khan Z.M."/>
            <person name="Kovar-Smith C."/>
            <person name="Lewis L.R."/>
            <person name="Lozado R.J."/>
            <person name="Metzker M.L."/>
            <person name="Milosavljevic A."/>
            <person name="Miner G.R."/>
            <person name="Morgan M.B."/>
            <person name="Nazareth L.V."/>
            <person name="Scott G."/>
            <person name="Sodergren E."/>
            <person name="Song X.-Z."/>
            <person name="Steffen D."/>
            <person name="Wei S."/>
            <person name="Wheeler D.A."/>
            <person name="Wright M.W."/>
            <person name="Worley K.C."/>
            <person name="Yuan Y."/>
            <person name="Zhang Z."/>
            <person name="Adams C.Q."/>
            <person name="Ansari-Lari M.A."/>
            <person name="Ayele M."/>
            <person name="Brown M.J."/>
            <person name="Chen G."/>
            <person name="Chen Z."/>
            <person name="Clendenning J."/>
            <person name="Clerc-Blankenburg K.P."/>
            <person name="Chen R."/>
            <person name="Chen Z."/>
            <person name="Davis C."/>
            <person name="Delgado O."/>
            <person name="Dinh H.H."/>
            <person name="Dong W."/>
            <person name="Draper H."/>
            <person name="Ernst S."/>
            <person name="Fu G."/>
            <person name="Gonzalez-Garay M.L."/>
            <person name="Garcia D.K."/>
            <person name="Gillett W."/>
            <person name="Gu J."/>
            <person name="Hao B."/>
            <person name="Haugen E."/>
            <person name="Havlak P."/>
            <person name="He X."/>
            <person name="Hennig S."/>
            <person name="Hu S."/>
            <person name="Huang W."/>
            <person name="Jackson L.R."/>
            <person name="Jacob L.S."/>
            <person name="Kelly S.H."/>
            <person name="Kube M."/>
            <person name="Levy R."/>
            <person name="Li Z."/>
            <person name="Liu B."/>
            <person name="Liu J."/>
            <person name="Liu W."/>
            <person name="Lu J."/>
            <person name="Maheshwari M."/>
            <person name="Nguyen B.-V."/>
            <person name="Okwuonu G.O."/>
            <person name="Palmeiri A."/>
            <person name="Pasternak S."/>
            <person name="Perez L.M."/>
            <person name="Phelps K.A."/>
            <person name="Plopper F.J."/>
            <person name="Qiang B."/>
            <person name="Raymond C."/>
            <person name="Rodriguez R."/>
            <person name="Saenphimmachak C."/>
            <person name="Santibanez J."/>
            <person name="Shen H."/>
            <person name="Shen Y."/>
            <person name="Subramanian S."/>
            <person name="Tabor P.E."/>
            <person name="Verduzco D."/>
            <person name="Waldron L."/>
            <person name="Wang J."/>
            <person name="Wang J."/>
            <person name="Wang Q."/>
            <person name="Williams G.A."/>
            <person name="Wong G.K.-S."/>
            <person name="Yao Z."/>
            <person name="Zhang J."/>
            <person name="Zhang X."/>
            <person name="Zhao G."/>
            <person name="Zhou J."/>
            <person name="Zhou Y."/>
            <person name="Nelson D."/>
            <person name="Lehrach H."/>
            <person name="Reinhardt R."/>
            <person name="Naylor S.L."/>
            <person name="Yang H."/>
            <person name="Olson M."/>
            <person name="Weinstock G."/>
            <person name="Gibbs R.A."/>
        </authorList>
    </citation>
    <scope>NUCLEOTIDE SEQUENCE [LARGE SCALE GENOMIC DNA]</scope>
</reference>
<reference key="4">
    <citation type="submission" date="2005-09" db="EMBL/GenBank/DDBJ databases">
        <authorList>
            <person name="Mural R.J."/>
            <person name="Istrail S."/>
            <person name="Sutton G.G."/>
            <person name="Florea L."/>
            <person name="Halpern A.L."/>
            <person name="Mobarry C.M."/>
            <person name="Lippert R."/>
            <person name="Walenz B."/>
            <person name="Shatkay H."/>
            <person name="Dew I."/>
            <person name="Miller J.R."/>
            <person name="Flanigan M.J."/>
            <person name="Edwards N.J."/>
            <person name="Bolanos R."/>
            <person name="Fasulo D."/>
            <person name="Halldorsson B.V."/>
            <person name="Hannenhalli S."/>
            <person name="Turner R."/>
            <person name="Yooseph S."/>
            <person name="Lu F."/>
            <person name="Nusskern D.R."/>
            <person name="Shue B.C."/>
            <person name="Zheng X.H."/>
            <person name="Zhong F."/>
            <person name="Delcher A.L."/>
            <person name="Huson D.H."/>
            <person name="Kravitz S.A."/>
            <person name="Mouchard L."/>
            <person name="Reinert K."/>
            <person name="Remington K.A."/>
            <person name="Clark A.G."/>
            <person name="Waterman M.S."/>
            <person name="Eichler E.E."/>
            <person name="Adams M.D."/>
            <person name="Hunkapiller M.W."/>
            <person name="Myers E.W."/>
            <person name="Venter J.C."/>
        </authorList>
    </citation>
    <scope>NUCLEOTIDE SEQUENCE [LARGE SCALE GENOMIC DNA]</scope>
</reference>
<reference key="5">
    <citation type="journal article" date="2004" name="Genome Res.">
        <title>The status, quality, and expansion of the NIH full-length cDNA project: the Mammalian Gene Collection (MGC).</title>
        <authorList>
            <consortium name="The MGC Project Team"/>
        </authorList>
    </citation>
    <scope>NUCLEOTIDE SEQUENCE [LARGE SCALE MRNA] (ISOFORM 1)</scope>
    <source>
        <tissue>Skin</tissue>
    </source>
</reference>
<reference key="6">
    <citation type="journal article" date="2003" name="J. Cell Sci.">
        <title>Sorting nexin 4 and amphiphysin 2, a new partnership between endocytosis and intracellular trafficking.</title>
        <authorList>
            <person name="Leprince C."/>
            <person name="Le Scolan E."/>
            <person name="Meunier B."/>
            <person name="Fraisier V."/>
            <person name="Brandon N."/>
            <person name="De Gunzburg J."/>
            <person name="Camonis J."/>
        </authorList>
    </citation>
    <scope>FUNCTION</scope>
    <scope>SUBCELLULAR LOCATION</scope>
    <scope>INTERACTION WITH BIN1</scope>
</reference>
<reference key="7">
    <citation type="journal article" date="2007" name="Nat. Cell Biol.">
        <title>SNX4 coordinates endosomal sorting of TfnR with dynein-mediated transport into the endocytic recycling compartment.</title>
        <authorList>
            <person name="Traer C.J."/>
            <person name="Rutherford A.C."/>
            <person name="Palmer K.J."/>
            <person name="Wassmer T."/>
            <person name="Oakley J."/>
            <person name="Attar N."/>
            <person name="Carlton J.G."/>
            <person name="Kremerskothen J."/>
            <person name="Stephens D.J."/>
            <person name="Cullen P.J."/>
        </authorList>
    </citation>
    <scope>FUNCTION</scope>
    <scope>INTERACTION WITH WWC1/KIBRA</scope>
    <scope>MUTAGENESIS OF LYS-132</scope>
    <scope>SUBCELLULAR LOCATION</scope>
</reference>
<reference key="8">
    <citation type="journal article" date="2008" name="Proc. Natl. Acad. Sci. U.S.A.">
        <title>A quantitative atlas of mitotic phosphorylation.</title>
        <authorList>
            <person name="Dephoure N."/>
            <person name="Zhou C."/>
            <person name="Villen J."/>
            <person name="Beausoleil S.A."/>
            <person name="Bakalarski C.E."/>
            <person name="Elledge S.J."/>
            <person name="Gygi S.P."/>
        </authorList>
    </citation>
    <scope>IDENTIFICATION BY MASS SPECTROMETRY [LARGE SCALE ANALYSIS]</scope>
    <source>
        <tissue>Cervix carcinoma</tissue>
    </source>
</reference>
<reference key="9">
    <citation type="journal article" date="2009" name="Anal. Chem.">
        <title>Lys-N and trypsin cover complementary parts of the phosphoproteome in a refined SCX-based approach.</title>
        <authorList>
            <person name="Gauci S."/>
            <person name="Helbig A.O."/>
            <person name="Slijper M."/>
            <person name="Krijgsveld J."/>
            <person name="Heck A.J."/>
            <person name="Mohammed S."/>
        </authorList>
    </citation>
    <scope>ACETYLATION [LARGE SCALE ANALYSIS] AT MET-1</scope>
    <scope>IDENTIFICATION BY MASS SPECTROMETRY [LARGE SCALE ANALYSIS]</scope>
</reference>
<reference key="10">
    <citation type="journal article" date="2010" name="Sci. Signal.">
        <title>Quantitative phosphoproteomics reveals widespread full phosphorylation site occupancy during mitosis.</title>
        <authorList>
            <person name="Olsen J.V."/>
            <person name="Vermeulen M."/>
            <person name="Santamaria A."/>
            <person name="Kumar C."/>
            <person name="Miller M.L."/>
            <person name="Jensen L.J."/>
            <person name="Gnad F."/>
            <person name="Cox J."/>
            <person name="Jensen T.S."/>
            <person name="Nigg E.A."/>
            <person name="Brunak S."/>
            <person name="Mann M."/>
        </authorList>
    </citation>
    <scope>PHOSPHORYLATION [LARGE SCALE ANALYSIS] AT SER-22</scope>
    <scope>IDENTIFICATION BY MASS SPECTROMETRY [LARGE SCALE ANALYSIS]</scope>
    <source>
        <tissue>Cervix carcinoma</tissue>
    </source>
</reference>
<reference key="11">
    <citation type="journal article" date="2011" name="BMC Syst. Biol.">
        <title>Initial characterization of the human central proteome.</title>
        <authorList>
            <person name="Burkard T.R."/>
            <person name="Planyavsky M."/>
            <person name="Kaupe I."/>
            <person name="Breitwieser F.P."/>
            <person name="Buerckstuemmer T."/>
            <person name="Bennett K.L."/>
            <person name="Superti-Furga G."/>
            <person name="Colinge J."/>
        </authorList>
    </citation>
    <scope>IDENTIFICATION BY MASS SPECTROMETRY [LARGE SCALE ANALYSIS]</scope>
</reference>
<reference key="12">
    <citation type="journal article" date="2013" name="J. Proteome Res.">
        <title>Toward a comprehensive characterization of a human cancer cell phosphoproteome.</title>
        <authorList>
            <person name="Zhou H."/>
            <person name="Di Palma S."/>
            <person name="Preisinger C."/>
            <person name="Peng M."/>
            <person name="Polat A.N."/>
            <person name="Heck A.J."/>
            <person name="Mohammed S."/>
        </authorList>
    </citation>
    <scope>PHOSPHORYLATION [LARGE SCALE ANALYSIS] AT SER-22</scope>
    <scope>IDENTIFICATION BY MASS SPECTROMETRY [LARGE SCALE ANALYSIS]</scope>
    <source>
        <tissue>Erythroleukemia</tissue>
    </source>
</reference>
<reference key="13">
    <citation type="journal article" date="2020" name="J. Cell Sci.">
        <title>A heterodimeric SNX4--SNX7 SNX-BAR autophagy complex coordinates ATG9A trafficking for efficient autophagosome assembly.</title>
        <authorList>
            <person name="Anton Z."/>
            <person name="Betin V.M.S."/>
            <person name="Simonetti B."/>
            <person name="Traer C.J."/>
            <person name="Attar N."/>
            <person name="Cullen P.J."/>
            <person name="Lane J.D."/>
        </authorList>
    </citation>
    <scope>FUNCTION</scope>
    <scope>SUBCELLULAR LOCATION</scope>
    <scope>INTERACTION WITH SNX7 AND SNX30</scope>
</reference>
<reference key="14">
    <citation type="journal article" date="2021" name="J. Cell Sci.">
        <title>The phosphatidylinositol 3-phosphate-binding protein SNX4 controls ATG9A recycling and autophagy.</title>
        <authorList>
            <person name="Ravussin A."/>
            <person name="Brech A."/>
            <person name="Tooze S.A."/>
            <person name="Stenmark H."/>
        </authorList>
    </citation>
    <scope>FUNCTION</scope>
    <scope>SUBCELLULAR LOCATION</scope>
</reference>
<keyword id="KW-0007">Acetylation</keyword>
<keyword id="KW-0025">Alternative splicing</keyword>
<keyword id="KW-0967">Endosome</keyword>
<keyword id="KW-0446">Lipid-binding</keyword>
<keyword id="KW-0472">Membrane</keyword>
<keyword id="KW-0597">Phosphoprotein</keyword>
<keyword id="KW-0653">Protein transport</keyword>
<keyword id="KW-1267">Proteomics identification</keyword>
<keyword id="KW-1185">Reference proteome</keyword>
<keyword id="KW-0813">Transport</keyword>
<name>SNX4_HUMAN</name>
<protein>
    <recommendedName>
        <fullName evidence="11">Sorting nexin-4</fullName>
    </recommendedName>
</protein>
<accession>O95219</accession>
<accession>B3KMH0</accession>
<accession>B4DQV4</accession>
<accession>D3DNA3</accession>
<gene>
    <name evidence="11 13" type="primary">SNX4</name>
</gene>
<sequence>MEQAPPDPERQLQPAPLEPLGSPDAGLGAAVGKEAEGAGEESSGVDTMTHNNFWLKKIEISVSEAEKRTGRNAMNMQETYTAYLIETRSVEHTDGQSVLTDSLWRRYSEFELLRSYLLVYYPHIVVPPLPEKRAEFVWHKLSADNMDPDFVERRRIGLENFLLRIASHPILCRDKIFYLFLTQEGNWKETVNETGFQLKADSRLKALNATFRVKNPDKRFTDLKHYSDELQSVISHLLRVRARVADRLYGVYKVHGNYGRVFSEWSAIEKEMGDGLQSAGHHMDVYASSIDDILEDEEHYADQLKEYLFYAEALRAVCRKHELMQYDLEMAAQDLASKKQQCEELVTGTVRTFSLKGMTTKLFGQETPEQREARIKVLEEQINEGEQQLKSKNLEGREFVKNAWADIERFKEQKNRDLKEALISYAVMQISMCKKGIQVWTNAKECFSKM</sequence>
<organism>
    <name type="scientific">Homo sapiens</name>
    <name type="common">Human</name>
    <dbReference type="NCBI Taxonomy" id="9606"/>
    <lineage>
        <taxon>Eukaryota</taxon>
        <taxon>Metazoa</taxon>
        <taxon>Chordata</taxon>
        <taxon>Craniata</taxon>
        <taxon>Vertebrata</taxon>
        <taxon>Euteleostomi</taxon>
        <taxon>Mammalia</taxon>
        <taxon>Eutheria</taxon>
        <taxon>Euarchontoglires</taxon>
        <taxon>Primates</taxon>
        <taxon>Haplorrhini</taxon>
        <taxon>Catarrhini</taxon>
        <taxon>Hominidae</taxon>
        <taxon>Homo</taxon>
    </lineage>
</organism>
<evidence type="ECO:0000250" key="1">
    <source>
        <dbReference type="UniProtKB" id="Q3UR97"/>
    </source>
</evidence>
<evidence type="ECO:0000250" key="2">
    <source>
        <dbReference type="UniProtKB" id="Q6P4T1"/>
    </source>
</evidence>
<evidence type="ECO:0000250" key="3">
    <source>
        <dbReference type="UniProtKB" id="Q96L94"/>
    </source>
</evidence>
<evidence type="ECO:0000255" key="4">
    <source>
        <dbReference type="PROSITE-ProRule" id="PRU00147"/>
    </source>
</evidence>
<evidence type="ECO:0000256" key="5">
    <source>
        <dbReference type="SAM" id="MobiDB-lite"/>
    </source>
</evidence>
<evidence type="ECO:0000269" key="6">
    <source>
    </source>
</evidence>
<evidence type="ECO:0000269" key="7">
    <source>
    </source>
</evidence>
<evidence type="ECO:0000269" key="8">
    <source>
    </source>
</evidence>
<evidence type="ECO:0000269" key="9">
    <source>
    </source>
</evidence>
<evidence type="ECO:0000303" key="10">
    <source>
    </source>
</evidence>
<evidence type="ECO:0000303" key="11">
    <source>
    </source>
</evidence>
<evidence type="ECO:0000305" key="12"/>
<evidence type="ECO:0000312" key="13">
    <source>
        <dbReference type="HGNC" id="HGNC:11175"/>
    </source>
</evidence>
<evidence type="ECO:0007744" key="14">
    <source>
    </source>
</evidence>
<evidence type="ECO:0007744" key="15">
    <source>
    </source>
</evidence>
<evidence type="ECO:0007744" key="16">
    <source>
    </source>
</evidence>
<comment type="function">
    <text evidence="6 7 8 9">Involved in the regulation of endocytosis and in several stages of intracellular trafficking (PubMed:12668730, PubMed:17994011, PubMed:32513819, PubMed:33468622). Plays a role in recycling endocytosed transferrin receptor and prevent its degradation (PubMed:17994011). Involved in autophagosome assembly by regulating trafficking and recycling of phospholipid scramblase ATG9A (PubMed:32513819, PubMed:33468622).</text>
</comment>
<comment type="subunit">
    <text evidence="6 7 8">Heterodimer; heterodimerizes with SNX7 or SNX30 (PubMed:32513819). Interacts with WWC1/KIBRA (PubMed:17994011). Identified in a complex with WWC1/KIBRA and dynein components DYNLL1 and DYNC1I2 (PubMed:17994011). Interacts with BIN1 (PubMed:12668730).</text>
</comment>
<comment type="interaction">
    <interactant intactId="EBI-724909">
        <id>O95219</id>
    </interactant>
    <interactant intactId="EBI-714543">
        <id>Q15041</id>
        <label>ARL6IP1</label>
    </interactant>
    <organismsDiffer>false</organismsDiffer>
    <experiments>3</experiments>
</comment>
<comment type="interaction">
    <interactant intactId="EBI-724909">
        <id>O95219</id>
    </interactant>
    <interactant intactId="EBI-719094">
        <id>O00499</id>
        <label>BIN1</label>
    </interactant>
    <organismsDiffer>false</organismsDiffer>
    <experiments>4</experiments>
</comment>
<comment type="interaction">
    <interactant intactId="EBI-724909">
        <id>O95219</id>
    </interactant>
    <interactant intactId="EBI-12831978">
        <id>Q6ZPD8</id>
        <label>DGAT2L6</label>
    </interactant>
    <organismsDiffer>false</organismsDiffer>
    <experiments>3</experiments>
</comment>
<comment type="interaction">
    <interactant intactId="EBI-724909">
        <id>O95219</id>
    </interactant>
    <interactant intactId="EBI-1045155">
        <id>P43360</id>
        <label>MAGEA6</label>
    </interactant>
    <organismsDiffer>false</organismsDiffer>
    <experiments>3</experiments>
</comment>
<comment type="interaction">
    <interactant intactId="EBI-724909">
        <id>O95219</id>
    </interactant>
    <interactant intactId="EBI-2623095">
        <id>Q9Y371</id>
        <label>SH3GLB1</label>
    </interactant>
    <organismsDiffer>false</organismsDiffer>
    <experiments>3</experiments>
</comment>
<comment type="interaction">
    <interactant intactId="EBI-724909">
        <id>O95219</id>
    </interactant>
    <interactant intactId="EBI-8099676">
        <id>Q5VWJ9</id>
        <label>SNX30</label>
    </interactant>
    <organismsDiffer>false</organismsDiffer>
    <experiments>6</experiments>
</comment>
<comment type="interaction">
    <interactant intactId="EBI-724909">
        <id>O95219</id>
    </interactant>
    <interactant intactId="EBI-751422">
        <id>Q9UNH6</id>
        <label>SNX7</label>
    </interactant>
    <organismsDiffer>false</organismsDiffer>
    <experiments>6</experiments>
</comment>
<comment type="interaction">
    <interactant intactId="EBI-724909">
        <id>O95219</id>
    </interactant>
    <interactant intactId="EBI-12424584">
        <id>Q9UNH6-3</id>
        <label>SNX7</label>
    </interactant>
    <organismsDiffer>false</organismsDiffer>
    <experiments>4</experiments>
</comment>
<comment type="subcellular location">
    <subcellularLocation>
        <location evidence="7 8 9">Early endosome membrane</location>
        <topology evidence="7">Peripheral membrane protein</topology>
        <orientation evidence="7">Cytoplasmic side</orientation>
    </subcellularLocation>
    <text evidence="7">Also detected on a juxtanuclear endocytic recycling compartment (ERC).</text>
</comment>
<comment type="alternative products">
    <event type="alternative splicing"/>
    <isoform>
        <id>O95219-1</id>
        <name>1</name>
        <sequence type="displayed"/>
    </isoform>
    <isoform>
        <id>O95219-2</id>
        <name>2</name>
        <sequence type="described" ref="VSP_056665"/>
    </isoform>
</comment>
<comment type="domain">
    <text evidence="3">The PX domain binds phosphatidylinositol 3-phosphate which is necessary for peripheral membrane localization.</text>
</comment>
<comment type="similarity">
    <text evidence="12">Belongs to the sorting nexin family.</text>
</comment>
<proteinExistence type="evidence at protein level"/>
<dbReference type="EMBL" id="AF065485">
    <property type="protein sequence ID" value="AAC83149.1"/>
    <property type="molecule type" value="mRNA"/>
</dbReference>
<dbReference type="EMBL" id="AK001835">
    <property type="protein sequence ID" value="BAG50982.1"/>
    <property type="molecule type" value="mRNA"/>
</dbReference>
<dbReference type="EMBL" id="AK298972">
    <property type="protein sequence ID" value="BAG61066.1"/>
    <property type="molecule type" value="mRNA"/>
</dbReference>
<dbReference type="EMBL" id="AC080096">
    <property type="status" value="NOT_ANNOTATED_CDS"/>
    <property type="molecule type" value="Genomic_DNA"/>
</dbReference>
<dbReference type="EMBL" id="AC117487">
    <property type="status" value="NOT_ANNOTATED_CDS"/>
    <property type="molecule type" value="Genomic_DNA"/>
</dbReference>
<dbReference type="EMBL" id="CH471052">
    <property type="protein sequence ID" value="EAW79390.1"/>
    <property type="molecule type" value="Genomic_DNA"/>
</dbReference>
<dbReference type="EMBL" id="CH471052">
    <property type="protein sequence ID" value="EAW79391.1"/>
    <property type="molecule type" value="Genomic_DNA"/>
</dbReference>
<dbReference type="EMBL" id="CH471052">
    <property type="protein sequence ID" value="EAW79393.1"/>
    <property type="molecule type" value="Genomic_DNA"/>
</dbReference>
<dbReference type="EMBL" id="BC018762">
    <property type="protein sequence ID" value="AAH18762.1"/>
    <property type="molecule type" value="mRNA"/>
</dbReference>
<dbReference type="CCDS" id="CCDS3032.1">
    <molecule id="O95219-1"/>
</dbReference>
<dbReference type="RefSeq" id="NP_003785.1">
    <molecule id="O95219-1"/>
    <property type="nucleotide sequence ID" value="NM_003794.4"/>
</dbReference>
<dbReference type="SMR" id="O95219"/>
<dbReference type="BioGRID" id="114262">
    <property type="interactions" value="69"/>
</dbReference>
<dbReference type="DIP" id="DIP-36719N"/>
<dbReference type="FunCoup" id="O95219">
    <property type="interactions" value="1468"/>
</dbReference>
<dbReference type="IntAct" id="O95219">
    <property type="interactions" value="45"/>
</dbReference>
<dbReference type="MINT" id="O95219"/>
<dbReference type="STRING" id="9606.ENSP00000251775"/>
<dbReference type="TCDB" id="3.A.34.1.1">
    <property type="family name" value="the sorting nexins of the escrt complexes (sn-escrt)"/>
</dbReference>
<dbReference type="GlyGen" id="O95219">
    <property type="glycosylation" value="1 site, 1 N-linked glycan (1 site)"/>
</dbReference>
<dbReference type="iPTMnet" id="O95219"/>
<dbReference type="MetOSite" id="O95219"/>
<dbReference type="PhosphoSitePlus" id="O95219"/>
<dbReference type="BioMuta" id="SNX4"/>
<dbReference type="jPOST" id="O95219"/>
<dbReference type="MassIVE" id="O95219"/>
<dbReference type="PaxDb" id="9606-ENSP00000251775"/>
<dbReference type="PeptideAtlas" id="O95219"/>
<dbReference type="ProteomicsDB" id="4904"/>
<dbReference type="ProteomicsDB" id="50724">
    <molecule id="O95219-1"/>
</dbReference>
<dbReference type="Pumba" id="O95219"/>
<dbReference type="Antibodypedia" id="1370">
    <property type="antibodies" value="277 antibodies from 33 providers"/>
</dbReference>
<dbReference type="DNASU" id="8723"/>
<dbReference type="Ensembl" id="ENST00000251775.9">
    <molecule id="O95219-1"/>
    <property type="protein sequence ID" value="ENSP00000251775.4"/>
    <property type="gene ID" value="ENSG00000114520.11"/>
</dbReference>
<dbReference type="GeneID" id="8723"/>
<dbReference type="KEGG" id="hsa:8723"/>
<dbReference type="MANE-Select" id="ENST00000251775.9">
    <property type="protein sequence ID" value="ENSP00000251775.4"/>
    <property type="RefSeq nucleotide sequence ID" value="NM_003794.4"/>
    <property type="RefSeq protein sequence ID" value="NP_003785.1"/>
</dbReference>
<dbReference type="UCSC" id="uc003eib.5">
    <molecule id="O95219-1"/>
    <property type="organism name" value="human"/>
</dbReference>
<dbReference type="AGR" id="HGNC:11175"/>
<dbReference type="CTD" id="8723"/>
<dbReference type="DisGeNET" id="8723"/>
<dbReference type="GeneCards" id="SNX4"/>
<dbReference type="HGNC" id="HGNC:11175">
    <property type="gene designation" value="SNX4"/>
</dbReference>
<dbReference type="HPA" id="ENSG00000114520">
    <property type="expression patterns" value="Low tissue specificity"/>
</dbReference>
<dbReference type="MIM" id="605931">
    <property type="type" value="gene"/>
</dbReference>
<dbReference type="neXtProt" id="NX_O95219"/>
<dbReference type="OpenTargets" id="ENSG00000114520"/>
<dbReference type="PharmGKB" id="PA36014"/>
<dbReference type="VEuPathDB" id="HostDB:ENSG00000114520"/>
<dbReference type="eggNOG" id="KOG2273">
    <property type="taxonomic scope" value="Eukaryota"/>
</dbReference>
<dbReference type="GeneTree" id="ENSGT00930000151029"/>
<dbReference type="HOGENOM" id="CLU_057138_0_0_1"/>
<dbReference type="InParanoid" id="O95219"/>
<dbReference type="OMA" id="LQKSGHY"/>
<dbReference type="OrthoDB" id="289314at2759"/>
<dbReference type="PAN-GO" id="O95219">
    <property type="GO annotations" value="6 GO annotations based on evolutionary models"/>
</dbReference>
<dbReference type="PhylomeDB" id="O95219"/>
<dbReference type="TreeFam" id="TF328543"/>
<dbReference type="PathwayCommons" id="O95219"/>
<dbReference type="SignaLink" id="O95219"/>
<dbReference type="BioGRID-ORCS" id="8723">
    <property type="hits" value="10 hits in 1153 CRISPR screens"/>
</dbReference>
<dbReference type="CD-CODE" id="FB4E32DD">
    <property type="entry name" value="Presynaptic clusters and postsynaptic densities"/>
</dbReference>
<dbReference type="ChiTaRS" id="SNX4">
    <property type="organism name" value="human"/>
</dbReference>
<dbReference type="GeneWiki" id="SNX4"/>
<dbReference type="GenomeRNAi" id="8723"/>
<dbReference type="Pharos" id="O95219">
    <property type="development level" value="Tbio"/>
</dbReference>
<dbReference type="PRO" id="PR:O95219"/>
<dbReference type="Proteomes" id="UP000005640">
    <property type="component" value="Chromosome 3"/>
</dbReference>
<dbReference type="RNAct" id="O95219">
    <property type="molecule type" value="protein"/>
</dbReference>
<dbReference type="Bgee" id="ENSG00000114520">
    <property type="expression patterns" value="Expressed in secondary oocyte and 213 other cell types or tissues"/>
</dbReference>
<dbReference type="ExpressionAtlas" id="O95219">
    <property type="expression patterns" value="baseline and differential"/>
</dbReference>
<dbReference type="GO" id="GO:0005737">
    <property type="term" value="C:cytoplasm"/>
    <property type="evidence" value="ECO:0000314"/>
    <property type="project" value="HGNC-UCL"/>
</dbReference>
<dbReference type="GO" id="GO:0005868">
    <property type="term" value="C:cytoplasmic dynein complex"/>
    <property type="evidence" value="ECO:0000314"/>
    <property type="project" value="UniProtKB"/>
</dbReference>
<dbReference type="GO" id="GO:0005769">
    <property type="term" value="C:early endosome"/>
    <property type="evidence" value="ECO:0000314"/>
    <property type="project" value="UniProtKB"/>
</dbReference>
<dbReference type="GO" id="GO:0031901">
    <property type="term" value="C:early endosome membrane"/>
    <property type="evidence" value="ECO:0000314"/>
    <property type="project" value="UniProtKB"/>
</dbReference>
<dbReference type="GO" id="GO:0016020">
    <property type="term" value="C:membrane"/>
    <property type="evidence" value="ECO:0000314"/>
    <property type="project" value="UniProtKB"/>
</dbReference>
<dbReference type="GO" id="GO:0005886">
    <property type="term" value="C:plasma membrane"/>
    <property type="evidence" value="ECO:0000314"/>
    <property type="project" value="UniProtKB"/>
</dbReference>
<dbReference type="GO" id="GO:0098830">
    <property type="term" value="C:presynaptic endosome"/>
    <property type="evidence" value="ECO:0007669"/>
    <property type="project" value="Ensembl"/>
</dbReference>
<dbReference type="GO" id="GO:0032991">
    <property type="term" value="C:protein-containing complex"/>
    <property type="evidence" value="ECO:0000314"/>
    <property type="project" value="UniProtKB"/>
</dbReference>
<dbReference type="GO" id="GO:0031201">
    <property type="term" value="C:SNARE complex"/>
    <property type="evidence" value="ECO:0000314"/>
    <property type="project" value="UniProtKB"/>
</dbReference>
<dbReference type="GO" id="GO:0005154">
    <property type="term" value="F:epidermal growth factor receptor binding"/>
    <property type="evidence" value="ECO:0000314"/>
    <property type="project" value="UniProtKB"/>
</dbReference>
<dbReference type="GO" id="GO:0005158">
    <property type="term" value="F:insulin receptor binding"/>
    <property type="evidence" value="ECO:0000314"/>
    <property type="project" value="UniProtKB"/>
</dbReference>
<dbReference type="GO" id="GO:1990460">
    <property type="term" value="F:leptin receptor binding"/>
    <property type="evidence" value="ECO:0000314"/>
    <property type="project" value="UniProtKB"/>
</dbReference>
<dbReference type="GO" id="GO:0035091">
    <property type="term" value="F:phosphatidylinositol binding"/>
    <property type="evidence" value="ECO:0000315"/>
    <property type="project" value="UniProtKB"/>
</dbReference>
<dbReference type="GO" id="GO:0032266">
    <property type="term" value="F:phosphatidylinositol-3-phosphate binding"/>
    <property type="evidence" value="ECO:0000315"/>
    <property type="project" value="UniProtKB"/>
</dbReference>
<dbReference type="GO" id="GO:1990459">
    <property type="term" value="F:transferrin receptor binding"/>
    <property type="evidence" value="ECO:0000314"/>
    <property type="project" value="UniProtKB"/>
</dbReference>
<dbReference type="GO" id="GO:0032456">
    <property type="term" value="P:endocytic recycling"/>
    <property type="evidence" value="ECO:0000315"/>
    <property type="project" value="UniProtKB"/>
</dbReference>
<dbReference type="GO" id="GO:2000786">
    <property type="term" value="P:positive regulation of autophagosome assembly"/>
    <property type="evidence" value="ECO:0000315"/>
    <property type="project" value="UniProtKB"/>
</dbReference>
<dbReference type="GO" id="GO:1903595">
    <property type="term" value="P:positive regulation of histamine secretion by mast cell"/>
    <property type="evidence" value="ECO:0000315"/>
    <property type="project" value="UniProtKB"/>
</dbReference>
<dbReference type="GO" id="GO:0015031">
    <property type="term" value="P:protein transport"/>
    <property type="evidence" value="ECO:0000315"/>
    <property type="project" value="UniProtKB"/>
</dbReference>
<dbReference type="CDD" id="cd07622">
    <property type="entry name" value="BAR_SNX4"/>
    <property type="match status" value="1"/>
</dbReference>
<dbReference type="CDD" id="cd06864">
    <property type="entry name" value="PX_SNX4"/>
    <property type="match status" value="1"/>
</dbReference>
<dbReference type="FunFam" id="1.20.1270.60:FF:000035">
    <property type="entry name" value="Sorting nexin 4"/>
    <property type="match status" value="1"/>
</dbReference>
<dbReference type="FunFam" id="3.30.1520.10:FF:000031">
    <property type="entry name" value="Sorting nexin 4"/>
    <property type="match status" value="1"/>
</dbReference>
<dbReference type="Gene3D" id="1.20.1270.60">
    <property type="entry name" value="Arfaptin homology (AH) domain/BAR domain"/>
    <property type="match status" value="1"/>
</dbReference>
<dbReference type="Gene3D" id="3.30.1520.10">
    <property type="entry name" value="Phox-like domain"/>
    <property type="match status" value="1"/>
</dbReference>
<dbReference type="InterPro" id="IPR027267">
    <property type="entry name" value="AH/BAR_dom_sf"/>
</dbReference>
<dbReference type="InterPro" id="IPR001683">
    <property type="entry name" value="PX_dom"/>
</dbReference>
<dbReference type="InterPro" id="IPR036871">
    <property type="entry name" value="PX_dom_sf"/>
</dbReference>
<dbReference type="InterPro" id="IPR034902">
    <property type="entry name" value="PX_SNX4"/>
</dbReference>
<dbReference type="InterPro" id="IPR034783">
    <property type="entry name" value="SNX4"/>
</dbReference>
<dbReference type="InterPro" id="IPR037430">
    <property type="entry name" value="SNX4_BAR"/>
</dbReference>
<dbReference type="PANTHER" id="PTHR46596">
    <property type="entry name" value="SORTING NEXIN-4"/>
    <property type="match status" value="1"/>
</dbReference>
<dbReference type="PANTHER" id="PTHR46596:SF1">
    <property type="entry name" value="SORTING NEXIN-4"/>
    <property type="match status" value="1"/>
</dbReference>
<dbReference type="Pfam" id="PF00787">
    <property type="entry name" value="PX"/>
    <property type="match status" value="1"/>
</dbReference>
<dbReference type="SMART" id="SM00312">
    <property type="entry name" value="PX"/>
    <property type="match status" value="1"/>
</dbReference>
<dbReference type="SUPFAM" id="SSF64268">
    <property type="entry name" value="PX domain"/>
    <property type="match status" value="1"/>
</dbReference>
<dbReference type="PROSITE" id="PS50195">
    <property type="entry name" value="PX"/>
    <property type="match status" value="1"/>
</dbReference>
<feature type="chain" id="PRO_0000213842" description="Sorting nexin-4">
    <location>
        <begin position="1"/>
        <end position="450"/>
    </location>
</feature>
<feature type="domain" description="PX" evidence="4">
    <location>
        <begin position="61"/>
        <end position="187"/>
    </location>
</feature>
<feature type="region of interest" description="Disordered" evidence="5">
    <location>
        <begin position="1"/>
        <end position="46"/>
    </location>
</feature>
<feature type="binding site" evidence="1">
    <location>
        <position position="106"/>
    </location>
    <ligand>
        <name>a 1,2-diacyl-sn-glycero-3-phospho-(1D-myo-inositol-3-phosphate)</name>
        <dbReference type="ChEBI" id="CHEBI:58088"/>
    </ligand>
</feature>
<feature type="binding site" evidence="3">
    <location>
        <position position="108"/>
    </location>
    <ligand>
        <name>a 1,2-diacyl-sn-glycero-3-phospho-(1D-myo-inositol-3-phosphate)</name>
        <dbReference type="ChEBI" id="CHEBI:58088"/>
    </ligand>
</feature>
<feature type="binding site" evidence="3">
    <location>
        <position position="132"/>
    </location>
    <ligand>
        <name>a 1,2-diacyl-sn-glycero-3-phospho-(1D-myo-inositol-3-phosphate)</name>
        <dbReference type="ChEBI" id="CHEBI:58088"/>
    </ligand>
</feature>
<feature type="binding site" evidence="2">
    <location>
        <position position="154"/>
    </location>
    <ligand>
        <name>a 1,2-diacyl-sn-glycero-3-phospho-(1D-myo-inositol-3-phosphate)</name>
        <dbReference type="ChEBI" id="CHEBI:58088"/>
    </ligand>
</feature>
<feature type="modified residue" description="N-acetylmethionine" evidence="14">
    <location>
        <position position="1"/>
    </location>
</feature>
<feature type="modified residue" description="Phosphoserine" evidence="15 16">
    <location>
        <position position="22"/>
    </location>
</feature>
<feature type="splice variant" id="VSP_056665" description="In isoform 2." evidence="10">
    <location>
        <begin position="1"/>
        <end position="145"/>
    </location>
</feature>
<feature type="mutagenesis site" description="Abolishes phosphatidylinositol phosphate binding. Abolishes endosomal location." evidence="7">
    <original>K</original>
    <variation>A</variation>
    <location>
        <position position="132"/>
    </location>
</feature>